<protein>
    <recommendedName>
        <fullName>Probable sensor kinase SilS</fullName>
        <ecNumber>2.7.13.3</ecNumber>
    </recommendedName>
</protein>
<proteinExistence type="inferred from homology"/>
<accession>Q9ZHD4</accession>
<reference key="1">
    <citation type="journal article" date="1999" name="Nat. Med.">
        <title>Molecular basis for resistance to silver cations in Salmonella.</title>
        <authorList>
            <person name="Gupta A."/>
            <person name="Matsui K."/>
            <person name="Lo J.-F."/>
            <person name="Silver S."/>
        </authorList>
    </citation>
    <scope>NUCLEOTIDE SEQUENCE [GENOMIC DNA]</scope>
</reference>
<name>SILS_SALTM</name>
<comment type="function">
    <text>Component of the sil cation-efflux system that confers resistance to silver. Probable member of a two-component regulatory system SilS/SilR. May activate SilR by phosphorylation.</text>
</comment>
<comment type="catalytic activity">
    <reaction>
        <text>ATP + protein L-histidine = ADP + protein N-phospho-L-histidine.</text>
        <dbReference type="EC" id="2.7.13.3"/>
    </reaction>
</comment>
<comment type="subcellular location">
    <subcellularLocation>
        <location evidence="4">Cell inner membrane</location>
        <topology evidence="4">Multi-pass membrane protein</topology>
    </subcellularLocation>
</comment>
<sequence>MHSKPSRLPFSLALRLTFFISLSTILAFIAFTWFMLHSVEKHFAEQDVSDLQQISTTLSRILQSPADPDEKKVSKIKESIASYRNVALLLLNPRGEVLYSSAQGAALRPAVNSADFSEHSRARDVFLWTVEDTARAMDTGSGMKMETYRIIASSGQATFQGKQQNYVMLTGLSINFHLHYLDALKKNLIAIAVVISLLIVLIIRIAVRQGHLPLRNVSNAIKNITSENLDARLEPTRVPIELEQLVISFNHMIGKIEDVFTRQANFSADIAHEIRTPITNLVTQTEIALSQDRTQKELEDVLYSSLEEYNRMTKMVSDMLFLAQADNNQLIPDRVRFDLQSQNSLKVFRVFSEALGPKETPILLLKFNGMPCLVEGDPQMFRRAINNLLSNALRYTPEGQAITVSIREQESFFDLVIENPGKPIPEEHLSRLFDRFYRVDPSRQRKGEGSGIGLAIVKSIVEAHHGRVQVESDVHSTRFILSVPRLEKMIPDTQCWE</sequence>
<gene>
    <name type="primary">silS</name>
</gene>
<organism>
    <name type="scientific">Salmonella typhimurium</name>
    <dbReference type="NCBI Taxonomy" id="90371"/>
    <lineage>
        <taxon>Bacteria</taxon>
        <taxon>Pseudomonadati</taxon>
        <taxon>Pseudomonadota</taxon>
        <taxon>Gammaproteobacteria</taxon>
        <taxon>Enterobacterales</taxon>
        <taxon>Enterobacteriaceae</taxon>
        <taxon>Salmonella</taxon>
    </lineage>
</organism>
<geneLocation type="plasmid">
    <name>pMG101</name>
</geneLocation>
<feature type="chain" id="PRO_0000074878" description="Probable sensor kinase SilS">
    <location>
        <begin position="1"/>
        <end position="497"/>
    </location>
</feature>
<feature type="topological domain" description="Cytoplasmic" evidence="1">
    <location>
        <begin position="1"/>
        <end position="15"/>
    </location>
</feature>
<feature type="transmembrane region" description="Helical" evidence="1">
    <location>
        <begin position="16"/>
        <end position="36"/>
    </location>
</feature>
<feature type="topological domain" description="Periplasmic" evidence="1">
    <location>
        <begin position="37"/>
        <end position="186"/>
    </location>
</feature>
<feature type="transmembrane region" description="Helical" evidence="1">
    <location>
        <begin position="187"/>
        <end position="207"/>
    </location>
</feature>
<feature type="topological domain" description="Cytoplasmic" evidence="1">
    <location>
        <begin position="208"/>
        <end position="497"/>
    </location>
</feature>
<feature type="domain" description="HAMP" evidence="2">
    <location>
        <begin position="208"/>
        <end position="261"/>
    </location>
</feature>
<feature type="domain" description="Histidine kinase" evidence="3">
    <location>
        <begin position="269"/>
        <end position="487"/>
    </location>
</feature>
<feature type="modified residue" description="Phosphohistidine; by autocatalysis" evidence="3">
    <location>
        <position position="272"/>
    </location>
</feature>
<keyword id="KW-0067">ATP-binding</keyword>
<keyword id="KW-0997">Cell inner membrane</keyword>
<keyword id="KW-1003">Cell membrane</keyword>
<keyword id="KW-0418">Kinase</keyword>
<keyword id="KW-0472">Membrane</keyword>
<keyword id="KW-0547">Nucleotide-binding</keyword>
<keyword id="KW-0597">Phosphoprotein</keyword>
<keyword id="KW-0614">Plasmid</keyword>
<keyword id="KW-0808">Transferase</keyword>
<keyword id="KW-0812">Transmembrane</keyword>
<keyword id="KW-1133">Transmembrane helix</keyword>
<keyword id="KW-0902">Two-component regulatory system</keyword>
<dbReference type="EC" id="2.7.13.3"/>
<dbReference type="EMBL" id="AF067954">
    <property type="protein sequence ID" value="AAD11744.1"/>
    <property type="molecule type" value="Genomic_DNA"/>
</dbReference>
<dbReference type="SMR" id="Q9ZHD4"/>
<dbReference type="GO" id="GO:0005886">
    <property type="term" value="C:plasma membrane"/>
    <property type="evidence" value="ECO:0007669"/>
    <property type="project" value="UniProtKB-SubCell"/>
</dbReference>
<dbReference type="GO" id="GO:0005524">
    <property type="term" value="F:ATP binding"/>
    <property type="evidence" value="ECO:0007669"/>
    <property type="project" value="UniProtKB-KW"/>
</dbReference>
<dbReference type="GO" id="GO:0000155">
    <property type="term" value="F:phosphorelay sensor kinase activity"/>
    <property type="evidence" value="ECO:0007669"/>
    <property type="project" value="InterPro"/>
</dbReference>
<dbReference type="CDD" id="cd06225">
    <property type="entry name" value="HAMP"/>
    <property type="match status" value="1"/>
</dbReference>
<dbReference type="CDD" id="cd00082">
    <property type="entry name" value="HisKA"/>
    <property type="match status" value="1"/>
</dbReference>
<dbReference type="FunFam" id="3.30.565.10:FF:000006">
    <property type="entry name" value="Sensor histidine kinase WalK"/>
    <property type="match status" value="1"/>
</dbReference>
<dbReference type="FunFam" id="1.10.287.130:FF:000001">
    <property type="entry name" value="Two-component sensor histidine kinase"/>
    <property type="match status" value="1"/>
</dbReference>
<dbReference type="Gene3D" id="1.10.287.130">
    <property type="match status" value="1"/>
</dbReference>
<dbReference type="Gene3D" id="6.10.340.10">
    <property type="match status" value="1"/>
</dbReference>
<dbReference type="Gene3D" id="3.30.565.10">
    <property type="entry name" value="Histidine kinase-like ATPase, C-terminal domain"/>
    <property type="match status" value="1"/>
</dbReference>
<dbReference type="InterPro" id="IPR048590">
    <property type="entry name" value="CusS-like_sensor"/>
</dbReference>
<dbReference type="InterPro" id="IPR006290">
    <property type="entry name" value="CztS_silS_copS"/>
</dbReference>
<dbReference type="InterPro" id="IPR003660">
    <property type="entry name" value="HAMP_dom"/>
</dbReference>
<dbReference type="InterPro" id="IPR036890">
    <property type="entry name" value="HATPase_C_sf"/>
</dbReference>
<dbReference type="InterPro" id="IPR005467">
    <property type="entry name" value="His_kinase_dom"/>
</dbReference>
<dbReference type="InterPro" id="IPR003661">
    <property type="entry name" value="HisK_dim/P_dom"/>
</dbReference>
<dbReference type="InterPro" id="IPR036097">
    <property type="entry name" value="HisK_dim/P_sf"/>
</dbReference>
<dbReference type="InterPro" id="IPR004358">
    <property type="entry name" value="Sig_transdc_His_kin-like_C"/>
</dbReference>
<dbReference type="InterPro" id="IPR050428">
    <property type="entry name" value="TCS_sensor_his_kinase"/>
</dbReference>
<dbReference type="NCBIfam" id="TIGR01386">
    <property type="entry name" value="cztS_silS_copS"/>
    <property type="match status" value="1"/>
</dbReference>
<dbReference type="NCBIfam" id="NF007345">
    <property type="entry name" value="PRK09835.1"/>
    <property type="match status" value="1"/>
</dbReference>
<dbReference type="PANTHER" id="PTHR45436:SF15">
    <property type="entry name" value="SENSOR HISTIDINE KINASE CUSS"/>
    <property type="match status" value="1"/>
</dbReference>
<dbReference type="PANTHER" id="PTHR45436">
    <property type="entry name" value="SENSOR HISTIDINE KINASE YKOH"/>
    <property type="match status" value="1"/>
</dbReference>
<dbReference type="Pfam" id="PF21085">
    <property type="entry name" value="CusS"/>
    <property type="match status" value="1"/>
</dbReference>
<dbReference type="Pfam" id="PF00672">
    <property type="entry name" value="HAMP"/>
    <property type="match status" value="1"/>
</dbReference>
<dbReference type="Pfam" id="PF02518">
    <property type="entry name" value="HATPase_c"/>
    <property type="match status" value="1"/>
</dbReference>
<dbReference type="Pfam" id="PF00512">
    <property type="entry name" value="HisKA"/>
    <property type="match status" value="1"/>
</dbReference>
<dbReference type="PRINTS" id="PR00344">
    <property type="entry name" value="BCTRLSENSOR"/>
</dbReference>
<dbReference type="SMART" id="SM00304">
    <property type="entry name" value="HAMP"/>
    <property type="match status" value="1"/>
</dbReference>
<dbReference type="SMART" id="SM00387">
    <property type="entry name" value="HATPase_c"/>
    <property type="match status" value="1"/>
</dbReference>
<dbReference type="SMART" id="SM00388">
    <property type="entry name" value="HisKA"/>
    <property type="match status" value="1"/>
</dbReference>
<dbReference type="SUPFAM" id="SSF55874">
    <property type="entry name" value="ATPase domain of HSP90 chaperone/DNA topoisomerase II/histidine kinase"/>
    <property type="match status" value="1"/>
</dbReference>
<dbReference type="SUPFAM" id="SSF47384">
    <property type="entry name" value="Homodimeric domain of signal transducing histidine kinase"/>
    <property type="match status" value="1"/>
</dbReference>
<dbReference type="PROSITE" id="PS50885">
    <property type="entry name" value="HAMP"/>
    <property type="match status" value="1"/>
</dbReference>
<dbReference type="PROSITE" id="PS50109">
    <property type="entry name" value="HIS_KIN"/>
    <property type="match status" value="1"/>
</dbReference>
<evidence type="ECO:0000255" key="1"/>
<evidence type="ECO:0000255" key="2">
    <source>
        <dbReference type="PROSITE-ProRule" id="PRU00102"/>
    </source>
</evidence>
<evidence type="ECO:0000255" key="3">
    <source>
        <dbReference type="PROSITE-ProRule" id="PRU00107"/>
    </source>
</evidence>
<evidence type="ECO:0000305" key="4"/>